<proteinExistence type="inferred from homology"/>
<comment type="function">
    <text evidence="1">Regulates arginine biosynthesis genes.</text>
</comment>
<comment type="pathway">
    <text>Amino-acid biosynthesis; L-arginine biosynthesis [regulation].</text>
</comment>
<comment type="subcellular location">
    <subcellularLocation>
        <location evidence="1">Cytoplasm</location>
    </subcellularLocation>
</comment>
<comment type="similarity">
    <text evidence="1">Belongs to the ArgR family.</text>
</comment>
<protein>
    <recommendedName>
        <fullName evidence="1">Arginine repressor</fullName>
    </recommendedName>
</protein>
<feature type="chain" id="PRO_1000123806" description="Arginine repressor">
    <location>
        <begin position="1"/>
        <end position="156"/>
    </location>
</feature>
<gene>
    <name evidence="1" type="primary">argR</name>
    <name type="ordered locus">VS_0357</name>
</gene>
<evidence type="ECO:0000255" key="1">
    <source>
        <dbReference type="HAMAP-Rule" id="MF_00173"/>
    </source>
</evidence>
<organism>
    <name type="scientific">Vibrio atlanticus (strain LGP32)</name>
    <name type="common">Vibrio splendidus (strain Mel32)</name>
    <dbReference type="NCBI Taxonomy" id="575788"/>
    <lineage>
        <taxon>Bacteria</taxon>
        <taxon>Pseudomonadati</taxon>
        <taxon>Pseudomonadota</taxon>
        <taxon>Gammaproteobacteria</taxon>
        <taxon>Vibrionales</taxon>
        <taxon>Vibrionaceae</taxon>
        <taxon>Vibrio</taxon>
    </lineage>
</organism>
<reference key="1">
    <citation type="submission" date="2009-02" db="EMBL/GenBank/DDBJ databases">
        <title>Vibrio splendidus str. LGP32 complete genome.</title>
        <authorList>
            <person name="Mazel D."/>
            <person name="Le Roux F."/>
        </authorList>
    </citation>
    <scope>NUCLEOTIDE SEQUENCE [LARGE SCALE GENOMIC DNA]</scope>
    <source>
        <strain>LGP32</strain>
    </source>
</reference>
<accession>B7VIC9</accession>
<name>ARGR_VIBA3</name>
<sequence>MRNTEKQDNLVRAFKSLLKEERFGSQGEIVDALKHEGFESINQSKVSRMLTKFGAVRTRNAKMEMVYCLPAELGVPTVSSSLRELVLDIDHNNALVVIHTGPGAAQLIARLLDSLGKSEGILGVVAGDDTIFITPTLSVTTKQLFDSVCELFEYAG</sequence>
<dbReference type="EMBL" id="FM954972">
    <property type="protein sequence ID" value="CAV17366.1"/>
    <property type="molecule type" value="Genomic_DNA"/>
</dbReference>
<dbReference type="SMR" id="B7VIC9"/>
<dbReference type="STRING" id="575788.VS_0357"/>
<dbReference type="KEGG" id="vsp:VS_0357"/>
<dbReference type="eggNOG" id="COG1438">
    <property type="taxonomic scope" value="Bacteria"/>
</dbReference>
<dbReference type="HOGENOM" id="CLU_097103_2_0_6"/>
<dbReference type="UniPathway" id="UPA00068"/>
<dbReference type="Proteomes" id="UP000009100">
    <property type="component" value="Chromosome 1"/>
</dbReference>
<dbReference type="GO" id="GO:0005737">
    <property type="term" value="C:cytoplasm"/>
    <property type="evidence" value="ECO:0007669"/>
    <property type="project" value="UniProtKB-SubCell"/>
</dbReference>
<dbReference type="GO" id="GO:0034618">
    <property type="term" value="F:arginine binding"/>
    <property type="evidence" value="ECO:0007669"/>
    <property type="project" value="InterPro"/>
</dbReference>
<dbReference type="GO" id="GO:0003677">
    <property type="term" value="F:DNA binding"/>
    <property type="evidence" value="ECO:0007669"/>
    <property type="project" value="UniProtKB-KW"/>
</dbReference>
<dbReference type="GO" id="GO:0003700">
    <property type="term" value="F:DNA-binding transcription factor activity"/>
    <property type="evidence" value="ECO:0007669"/>
    <property type="project" value="UniProtKB-UniRule"/>
</dbReference>
<dbReference type="GO" id="GO:0006526">
    <property type="term" value="P:L-arginine biosynthetic process"/>
    <property type="evidence" value="ECO:0007669"/>
    <property type="project" value="UniProtKB-UniPathway"/>
</dbReference>
<dbReference type="GO" id="GO:0051259">
    <property type="term" value="P:protein complex oligomerization"/>
    <property type="evidence" value="ECO:0007669"/>
    <property type="project" value="InterPro"/>
</dbReference>
<dbReference type="GO" id="GO:1900079">
    <property type="term" value="P:regulation of arginine biosynthetic process"/>
    <property type="evidence" value="ECO:0007669"/>
    <property type="project" value="UniProtKB-UniRule"/>
</dbReference>
<dbReference type="Gene3D" id="3.30.1360.40">
    <property type="match status" value="1"/>
</dbReference>
<dbReference type="Gene3D" id="1.10.10.10">
    <property type="entry name" value="Winged helix-like DNA-binding domain superfamily/Winged helix DNA-binding domain"/>
    <property type="match status" value="1"/>
</dbReference>
<dbReference type="HAMAP" id="MF_00173">
    <property type="entry name" value="Arg_repressor"/>
    <property type="match status" value="1"/>
</dbReference>
<dbReference type="InterPro" id="IPR001669">
    <property type="entry name" value="Arg_repress"/>
</dbReference>
<dbReference type="InterPro" id="IPR020899">
    <property type="entry name" value="Arg_repress_C"/>
</dbReference>
<dbReference type="InterPro" id="IPR036251">
    <property type="entry name" value="Arg_repress_C_sf"/>
</dbReference>
<dbReference type="InterPro" id="IPR020900">
    <property type="entry name" value="Arg_repress_DNA-bd"/>
</dbReference>
<dbReference type="InterPro" id="IPR036388">
    <property type="entry name" value="WH-like_DNA-bd_sf"/>
</dbReference>
<dbReference type="InterPro" id="IPR036390">
    <property type="entry name" value="WH_DNA-bd_sf"/>
</dbReference>
<dbReference type="NCBIfam" id="TIGR01529">
    <property type="entry name" value="argR_whole"/>
    <property type="match status" value="1"/>
</dbReference>
<dbReference type="NCBIfam" id="NF003457">
    <property type="entry name" value="PRK05066.1"/>
    <property type="match status" value="1"/>
</dbReference>
<dbReference type="PANTHER" id="PTHR34471">
    <property type="entry name" value="ARGININE REPRESSOR"/>
    <property type="match status" value="1"/>
</dbReference>
<dbReference type="PANTHER" id="PTHR34471:SF1">
    <property type="entry name" value="ARGININE REPRESSOR"/>
    <property type="match status" value="1"/>
</dbReference>
<dbReference type="Pfam" id="PF01316">
    <property type="entry name" value="Arg_repressor"/>
    <property type="match status" value="1"/>
</dbReference>
<dbReference type="Pfam" id="PF02863">
    <property type="entry name" value="Arg_repressor_C"/>
    <property type="match status" value="1"/>
</dbReference>
<dbReference type="PRINTS" id="PR01467">
    <property type="entry name" value="ARGREPRESSOR"/>
</dbReference>
<dbReference type="SUPFAM" id="SSF55252">
    <property type="entry name" value="C-terminal domain of arginine repressor"/>
    <property type="match status" value="1"/>
</dbReference>
<dbReference type="SUPFAM" id="SSF46785">
    <property type="entry name" value="Winged helix' DNA-binding domain"/>
    <property type="match status" value="1"/>
</dbReference>
<keyword id="KW-0028">Amino-acid biosynthesis</keyword>
<keyword id="KW-0055">Arginine biosynthesis</keyword>
<keyword id="KW-0963">Cytoplasm</keyword>
<keyword id="KW-0238">DNA-binding</keyword>
<keyword id="KW-0678">Repressor</keyword>
<keyword id="KW-0804">Transcription</keyword>
<keyword id="KW-0805">Transcription regulation</keyword>